<dbReference type="EC" id="6.1.1.15" evidence="1"/>
<dbReference type="EMBL" id="FM204884">
    <property type="protein sequence ID" value="CAW97925.1"/>
    <property type="molecule type" value="Genomic_DNA"/>
</dbReference>
<dbReference type="SMR" id="C0MFA1"/>
<dbReference type="KEGG" id="seq:SZO_02020"/>
<dbReference type="eggNOG" id="COG0442">
    <property type="taxonomic scope" value="Bacteria"/>
</dbReference>
<dbReference type="HOGENOM" id="CLU_016739_0_0_9"/>
<dbReference type="Proteomes" id="UP000001368">
    <property type="component" value="Chromosome"/>
</dbReference>
<dbReference type="GO" id="GO:0005829">
    <property type="term" value="C:cytosol"/>
    <property type="evidence" value="ECO:0007669"/>
    <property type="project" value="TreeGrafter"/>
</dbReference>
<dbReference type="GO" id="GO:0002161">
    <property type="term" value="F:aminoacyl-tRNA deacylase activity"/>
    <property type="evidence" value="ECO:0007669"/>
    <property type="project" value="InterPro"/>
</dbReference>
<dbReference type="GO" id="GO:0005524">
    <property type="term" value="F:ATP binding"/>
    <property type="evidence" value="ECO:0007669"/>
    <property type="project" value="UniProtKB-UniRule"/>
</dbReference>
<dbReference type="GO" id="GO:0140096">
    <property type="term" value="F:catalytic activity, acting on a protein"/>
    <property type="evidence" value="ECO:0007669"/>
    <property type="project" value="UniProtKB-ARBA"/>
</dbReference>
<dbReference type="GO" id="GO:0004827">
    <property type="term" value="F:proline-tRNA ligase activity"/>
    <property type="evidence" value="ECO:0007669"/>
    <property type="project" value="UniProtKB-UniRule"/>
</dbReference>
<dbReference type="GO" id="GO:0016740">
    <property type="term" value="F:transferase activity"/>
    <property type="evidence" value="ECO:0007669"/>
    <property type="project" value="UniProtKB-ARBA"/>
</dbReference>
<dbReference type="GO" id="GO:0006433">
    <property type="term" value="P:prolyl-tRNA aminoacylation"/>
    <property type="evidence" value="ECO:0007669"/>
    <property type="project" value="UniProtKB-UniRule"/>
</dbReference>
<dbReference type="CDD" id="cd04334">
    <property type="entry name" value="ProRS-INS"/>
    <property type="match status" value="1"/>
</dbReference>
<dbReference type="CDD" id="cd00861">
    <property type="entry name" value="ProRS_anticodon_short"/>
    <property type="match status" value="1"/>
</dbReference>
<dbReference type="FunFam" id="3.40.50.800:FF:000011">
    <property type="entry name" value="Proline--tRNA ligase"/>
    <property type="match status" value="1"/>
</dbReference>
<dbReference type="Gene3D" id="3.40.50.800">
    <property type="entry name" value="Anticodon-binding domain"/>
    <property type="match status" value="1"/>
</dbReference>
<dbReference type="Gene3D" id="3.30.930.10">
    <property type="entry name" value="Bira Bifunctional Protein, Domain 2"/>
    <property type="match status" value="2"/>
</dbReference>
<dbReference type="Gene3D" id="3.90.960.10">
    <property type="entry name" value="YbaK/aminoacyl-tRNA synthetase-associated domain"/>
    <property type="match status" value="1"/>
</dbReference>
<dbReference type="HAMAP" id="MF_01569">
    <property type="entry name" value="Pro_tRNA_synth_type1"/>
    <property type="match status" value="1"/>
</dbReference>
<dbReference type="InterPro" id="IPR002314">
    <property type="entry name" value="aa-tRNA-synt_IIb"/>
</dbReference>
<dbReference type="InterPro" id="IPR006195">
    <property type="entry name" value="aa-tRNA-synth_II"/>
</dbReference>
<dbReference type="InterPro" id="IPR045864">
    <property type="entry name" value="aa-tRNA-synth_II/BPL/LPL"/>
</dbReference>
<dbReference type="InterPro" id="IPR004154">
    <property type="entry name" value="Anticodon-bd"/>
</dbReference>
<dbReference type="InterPro" id="IPR036621">
    <property type="entry name" value="Anticodon-bd_dom_sf"/>
</dbReference>
<dbReference type="InterPro" id="IPR002316">
    <property type="entry name" value="Pro-tRNA-ligase_IIa"/>
</dbReference>
<dbReference type="InterPro" id="IPR004500">
    <property type="entry name" value="Pro-tRNA-synth_IIa_bac-type"/>
</dbReference>
<dbReference type="InterPro" id="IPR023717">
    <property type="entry name" value="Pro-tRNA-Synthase_IIa_type1"/>
</dbReference>
<dbReference type="InterPro" id="IPR050062">
    <property type="entry name" value="Pro-tRNA_synthetase"/>
</dbReference>
<dbReference type="InterPro" id="IPR044140">
    <property type="entry name" value="ProRS_anticodon_short"/>
</dbReference>
<dbReference type="InterPro" id="IPR036754">
    <property type="entry name" value="YbaK/aa-tRNA-synt-asso_dom_sf"/>
</dbReference>
<dbReference type="InterPro" id="IPR007214">
    <property type="entry name" value="YbaK/aa-tRNA-synth-assoc-dom"/>
</dbReference>
<dbReference type="NCBIfam" id="NF006625">
    <property type="entry name" value="PRK09194.1"/>
    <property type="match status" value="1"/>
</dbReference>
<dbReference type="NCBIfam" id="TIGR00409">
    <property type="entry name" value="proS_fam_II"/>
    <property type="match status" value="2"/>
</dbReference>
<dbReference type="PANTHER" id="PTHR42753">
    <property type="entry name" value="MITOCHONDRIAL RIBOSOME PROTEIN L39/PROLYL-TRNA LIGASE FAMILY MEMBER"/>
    <property type="match status" value="1"/>
</dbReference>
<dbReference type="PANTHER" id="PTHR42753:SF2">
    <property type="entry name" value="PROLINE--TRNA LIGASE"/>
    <property type="match status" value="1"/>
</dbReference>
<dbReference type="Pfam" id="PF03129">
    <property type="entry name" value="HGTP_anticodon"/>
    <property type="match status" value="1"/>
</dbReference>
<dbReference type="Pfam" id="PF00587">
    <property type="entry name" value="tRNA-synt_2b"/>
    <property type="match status" value="1"/>
</dbReference>
<dbReference type="Pfam" id="PF04073">
    <property type="entry name" value="tRNA_edit"/>
    <property type="match status" value="1"/>
</dbReference>
<dbReference type="PRINTS" id="PR01046">
    <property type="entry name" value="TRNASYNTHPRO"/>
</dbReference>
<dbReference type="SUPFAM" id="SSF52954">
    <property type="entry name" value="Class II aaRS ABD-related"/>
    <property type="match status" value="1"/>
</dbReference>
<dbReference type="SUPFAM" id="SSF55681">
    <property type="entry name" value="Class II aaRS and biotin synthetases"/>
    <property type="match status" value="1"/>
</dbReference>
<dbReference type="SUPFAM" id="SSF55826">
    <property type="entry name" value="YbaK/ProRS associated domain"/>
    <property type="match status" value="1"/>
</dbReference>
<dbReference type="PROSITE" id="PS50862">
    <property type="entry name" value="AA_TRNA_LIGASE_II"/>
    <property type="match status" value="1"/>
</dbReference>
<keyword id="KW-0030">Aminoacyl-tRNA synthetase</keyword>
<keyword id="KW-0067">ATP-binding</keyword>
<keyword id="KW-0963">Cytoplasm</keyword>
<keyword id="KW-0436">Ligase</keyword>
<keyword id="KW-0547">Nucleotide-binding</keyword>
<keyword id="KW-0648">Protein biosynthesis</keyword>
<gene>
    <name evidence="1" type="primary">proS</name>
    <name type="ordered locus">SZO_02020</name>
</gene>
<sequence>MKQSKMLIPTLREMPSDAQVISHALMVRAGYVRQVSAGIYAYLPLAHRTIEKFKTIMRQEFDKIGAVEMLAPALLTADLWRESGRYETYGEDLYKLKNRDKSDFILGPTHEETFTTLVRDAVKSYKQLPLNLYQIQSKYRDEKRPRNGLLRTREFIMKDGYSFHQSYDDLDVTYDAYRQAYEAIFTRAGLDFKGIIGDGGAMGGKDSQEFMAITPDRTNLDRWLVLDKSIPSLADIPEEVLEEIKAELASWLVSGEDTIAYSSESSYAANLEMATSEYKPSSKVTALDDLVEIETPNCKTIDEVAAFLDITEHQVIKTLLFMADHEPVLALLVGNDQINAVKLKNHLGADFLEPASEEEAHTILGAGFGSLGPVHLTDGIRIVADRKIQDLANAVAGANKDGYHLTGVNPNRDFQAEYADIREVKEGETSPDGHGVLQFARGIEIGHIFKLGTRYSDSMAANILDENGRAVPIVMGCYGIGVSRILSAVIEQHARLFVSKTPKGDYRYAWGINFPKELAPFDVHLITVNVKDQEAQDLTEKVEASLMAKGYDVLTDDRNERVGSKFSDSDLIGLPIRVTIGKKAAEGIVEIKIKATGDSIEVHADSLIETLDILTKDN</sequence>
<name>SYP_STRS7</name>
<proteinExistence type="inferred from homology"/>
<evidence type="ECO:0000255" key="1">
    <source>
        <dbReference type="HAMAP-Rule" id="MF_01569"/>
    </source>
</evidence>
<organism>
    <name type="scientific">Streptococcus equi subsp. zooepidemicus (strain H70)</name>
    <dbReference type="NCBI Taxonomy" id="553483"/>
    <lineage>
        <taxon>Bacteria</taxon>
        <taxon>Bacillati</taxon>
        <taxon>Bacillota</taxon>
        <taxon>Bacilli</taxon>
        <taxon>Lactobacillales</taxon>
        <taxon>Streptococcaceae</taxon>
        <taxon>Streptococcus</taxon>
    </lineage>
</organism>
<accession>C0MFA1</accession>
<protein>
    <recommendedName>
        <fullName evidence="1">Proline--tRNA ligase</fullName>
        <ecNumber evidence="1">6.1.1.15</ecNumber>
    </recommendedName>
    <alternativeName>
        <fullName evidence="1">Prolyl-tRNA synthetase</fullName>
        <shortName evidence="1">ProRS</shortName>
    </alternativeName>
</protein>
<comment type="function">
    <text evidence="1">Catalyzes the attachment of proline to tRNA(Pro) in a two-step reaction: proline is first activated by ATP to form Pro-AMP and then transferred to the acceptor end of tRNA(Pro). As ProRS can inadvertently accommodate and process non-cognate amino acids such as alanine and cysteine, to avoid such errors it has two additional distinct editing activities against alanine. One activity is designated as 'pretransfer' editing and involves the tRNA(Pro)-independent hydrolysis of activated Ala-AMP. The other activity is designated 'posttransfer' editing and involves deacylation of mischarged Ala-tRNA(Pro). The misacylated Cys-tRNA(Pro) is not edited by ProRS.</text>
</comment>
<comment type="catalytic activity">
    <reaction evidence="1">
        <text>tRNA(Pro) + L-proline + ATP = L-prolyl-tRNA(Pro) + AMP + diphosphate</text>
        <dbReference type="Rhea" id="RHEA:14305"/>
        <dbReference type="Rhea" id="RHEA-COMP:9700"/>
        <dbReference type="Rhea" id="RHEA-COMP:9702"/>
        <dbReference type="ChEBI" id="CHEBI:30616"/>
        <dbReference type="ChEBI" id="CHEBI:33019"/>
        <dbReference type="ChEBI" id="CHEBI:60039"/>
        <dbReference type="ChEBI" id="CHEBI:78442"/>
        <dbReference type="ChEBI" id="CHEBI:78532"/>
        <dbReference type="ChEBI" id="CHEBI:456215"/>
        <dbReference type="EC" id="6.1.1.15"/>
    </reaction>
</comment>
<comment type="subunit">
    <text evidence="1">Homodimer.</text>
</comment>
<comment type="subcellular location">
    <subcellularLocation>
        <location evidence="1">Cytoplasm</location>
    </subcellularLocation>
</comment>
<comment type="domain">
    <text evidence="1">Consists of three domains: the N-terminal catalytic domain, the editing domain and the C-terminal anticodon-binding domain.</text>
</comment>
<comment type="similarity">
    <text evidence="1">Belongs to the class-II aminoacyl-tRNA synthetase family. ProS type 1 subfamily.</text>
</comment>
<reference key="1">
    <citation type="journal article" date="2009" name="PLoS Pathog.">
        <title>Genomic evidence for the evolution of Streptococcus equi: host restriction, increased virulence, and genetic exchange with human pathogens.</title>
        <authorList>
            <person name="Holden M.T.G."/>
            <person name="Heather Z."/>
            <person name="Paillot R."/>
            <person name="Steward K.F."/>
            <person name="Webb K."/>
            <person name="Ainslie F."/>
            <person name="Jourdan T."/>
            <person name="Bason N.C."/>
            <person name="Holroyd N.E."/>
            <person name="Mungall K."/>
            <person name="Quail M.A."/>
            <person name="Sanders M."/>
            <person name="Simmonds M."/>
            <person name="Willey D."/>
            <person name="Brooks K."/>
            <person name="Aanensen D.M."/>
            <person name="Spratt B.G."/>
            <person name="Jolley K.A."/>
            <person name="Maiden M.C.J."/>
            <person name="Kehoe M."/>
            <person name="Chanter N."/>
            <person name="Bentley S.D."/>
            <person name="Robinson C."/>
            <person name="Maskell D.J."/>
            <person name="Parkhill J."/>
            <person name="Waller A.S."/>
        </authorList>
    </citation>
    <scope>NUCLEOTIDE SEQUENCE [LARGE SCALE GENOMIC DNA]</scope>
    <source>
        <strain>H70</strain>
    </source>
</reference>
<feature type="chain" id="PRO_1000215537" description="Proline--tRNA ligase">
    <location>
        <begin position="1"/>
        <end position="618"/>
    </location>
</feature>